<evidence type="ECO:0000255" key="1">
    <source>
        <dbReference type="PROSITE-ProRule" id="PRU00066"/>
    </source>
</evidence>
<evidence type="ECO:0000255" key="2">
    <source>
        <dbReference type="PROSITE-ProRule" id="PRU00145"/>
    </source>
</evidence>
<evidence type="ECO:0007744" key="3">
    <source>
    </source>
</evidence>
<evidence type="ECO:0007744" key="4">
    <source>
    </source>
</evidence>
<evidence type="ECO:0007829" key="5">
    <source>
        <dbReference type="PDB" id="1X1G"/>
    </source>
</evidence>
<keyword id="KW-0002">3D-structure</keyword>
<keyword id="KW-0007">Acetylation</keyword>
<keyword id="KW-1003">Cell membrane</keyword>
<keyword id="KW-0966">Cell projection</keyword>
<keyword id="KW-0963">Cytoplasm</keyword>
<keyword id="KW-0206">Cytoskeleton</keyword>
<keyword id="KW-0472">Membrane</keyword>
<keyword id="KW-0597">Phosphoprotein</keyword>
<keyword id="KW-1267">Proteomics identification</keyword>
<keyword id="KW-1185">Reference proteome</keyword>
<keyword id="KW-0677">Repeat</keyword>
<feature type="chain" id="PRO_0000053862" description="Pleckstrin-2">
    <location>
        <begin position="1"/>
        <end position="353"/>
    </location>
</feature>
<feature type="domain" description="PH 1" evidence="2">
    <location>
        <begin position="4"/>
        <end position="104"/>
    </location>
</feature>
<feature type="domain" description="DEP" evidence="1">
    <location>
        <begin position="139"/>
        <end position="225"/>
    </location>
</feature>
<feature type="domain" description="PH 2" evidence="2">
    <location>
        <begin position="247"/>
        <end position="353"/>
    </location>
</feature>
<feature type="modified residue" description="N-acetylmethionine" evidence="3">
    <location>
        <position position="1"/>
    </location>
</feature>
<feature type="modified residue" description="Phosphoserine" evidence="4">
    <location>
        <position position="120"/>
    </location>
</feature>
<feature type="sequence variant" id="VAR_050504" description="In dbSNP:rs34300264.">
    <original>T</original>
    <variation>M</variation>
    <location>
        <position position="80"/>
    </location>
</feature>
<feature type="strand" evidence="5">
    <location>
        <begin position="246"/>
        <end position="257"/>
    </location>
</feature>
<feature type="strand" evidence="5">
    <location>
        <begin position="259"/>
        <end position="275"/>
    </location>
</feature>
<feature type="strand" evidence="5">
    <location>
        <begin position="277"/>
        <end position="281"/>
    </location>
</feature>
<feature type="strand" evidence="5">
    <location>
        <begin position="283"/>
        <end position="285"/>
    </location>
</feature>
<feature type="strand" evidence="5">
    <location>
        <begin position="294"/>
        <end position="296"/>
    </location>
</feature>
<feature type="strand" evidence="5">
    <location>
        <begin position="306"/>
        <end position="309"/>
    </location>
</feature>
<feature type="strand" evidence="5">
    <location>
        <begin position="322"/>
        <end position="324"/>
    </location>
</feature>
<feature type="strand" evidence="5">
    <location>
        <begin position="332"/>
        <end position="334"/>
    </location>
</feature>
<feature type="helix" evidence="5">
    <location>
        <begin position="339"/>
        <end position="352"/>
    </location>
</feature>
<reference key="1">
    <citation type="submission" date="2000-01" db="EMBL/GenBank/DDBJ databases">
        <title>Homo sapiens pleckstrin 2: cloning and characterization.</title>
        <authorList>
            <person name="Inazu T."/>
        </authorList>
    </citation>
    <scope>NUCLEOTIDE SEQUENCE [MRNA]</scope>
</reference>
<reference key="2">
    <citation type="journal article" date="2004" name="Genome Res.">
        <title>The status, quality, and expansion of the NIH full-length cDNA project: the Mammalian Gene Collection (MGC).</title>
        <authorList>
            <consortium name="The MGC Project Team"/>
        </authorList>
    </citation>
    <scope>NUCLEOTIDE SEQUENCE [LARGE SCALE MRNA]</scope>
    <source>
        <tissue>Cervix</tissue>
        <tissue>Ovary</tissue>
    </source>
</reference>
<reference key="3">
    <citation type="journal article" date="2012" name="Proc. Natl. Acad. Sci. U.S.A.">
        <title>N-terminal acetylome analyses and functional insights of the N-terminal acetyltransferase NatB.</title>
        <authorList>
            <person name="Van Damme P."/>
            <person name="Lasa M."/>
            <person name="Polevoda B."/>
            <person name="Gazquez C."/>
            <person name="Elosegui-Artola A."/>
            <person name="Kim D.S."/>
            <person name="De Juan-Pardo E."/>
            <person name="Demeyer K."/>
            <person name="Hole K."/>
            <person name="Larrea E."/>
            <person name="Timmerman E."/>
            <person name="Prieto J."/>
            <person name="Arnesen T."/>
            <person name="Sherman F."/>
            <person name="Gevaert K."/>
            <person name="Aldabe R."/>
        </authorList>
    </citation>
    <scope>ACETYLATION [LARGE SCALE ANALYSIS] AT MET-1</scope>
    <scope>IDENTIFICATION BY MASS SPECTROMETRY [LARGE SCALE ANALYSIS]</scope>
</reference>
<reference key="4">
    <citation type="journal article" date="2013" name="J. Proteome Res.">
        <title>Toward a comprehensive characterization of a human cancer cell phosphoproteome.</title>
        <authorList>
            <person name="Zhou H."/>
            <person name="Di Palma S."/>
            <person name="Preisinger C."/>
            <person name="Peng M."/>
            <person name="Polat A.N."/>
            <person name="Heck A.J."/>
            <person name="Mohammed S."/>
        </authorList>
    </citation>
    <scope>PHOSPHORYLATION [LARGE SCALE ANALYSIS] AT SER-120</scope>
    <scope>IDENTIFICATION BY MASS SPECTROMETRY [LARGE SCALE ANALYSIS]</scope>
    <source>
        <tissue>Cervix carcinoma</tissue>
    </source>
</reference>
<reference key="5">
    <citation type="submission" date="2005-10" db="PDB data bank">
        <title>Solution structure of the C-terminal PH domain of human pleckstrin 2.</title>
        <authorList>
            <consortium name="RIKEN structural genomics initiative (RSGI)"/>
        </authorList>
    </citation>
    <scope>STRUCTURE BY NMR OF 238-353</scope>
</reference>
<accession>Q9NYT0</accession>
<accession>Q96JT0</accession>
<organism>
    <name type="scientific">Homo sapiens</name>
    <name type="common">Human</name>
    <dbReference type="NCBI Taxonomy" id="9606"/>
    <lineage>
        <taxon>Eukaryota</taxon>
        <taxon>Metazoa</taxon>
        <taxon>Chordata</taxon>
        <taxon>Craniata</taxon>
        <taxon>Vertebrata</taxon>
        <taxon>Euteleostomi</taxon>
        <taxon>Mammalia</taxon>
        <taxon>Eutheria</taxon>
        <taxon>Euarchontoglires</taxon>
        <taxon>Primates</taxon>
        <taxon>Haplorrhini</taxon>
        <taxon>Catarrhini</taxon>
        <taxon>Hominidae</taxon>
        <taxon>Homo</taxon>
    </lineage>
</organism>
<comment type="function">
    <text>May help orchestrate cytoskeletal arrangement. Contribute to lamellipodia formation.</text>
</comment>
<comment type="subcellular location">
    <subcellularLocation>
        <location>Cell projection</location>
        <location>Lamellipodium membrane</location>
        <topology>Peripheral membrane protein</topology>
    </subcellularLocation>
    <subcellularLocation>
        <location>Cytoplasm</location>
        <location>Cytoskeleton</location>
    </subcellularLocation>
</comment>
<protein>
    <recommendedName>
        <fullName>Pleckstrin-2</fullName>
    </recommendedName>
</protein>
<proteinExistence type="evidence at protein level"/>
<name>PLEK2_HUMAN</name>
<dbReference type="EMBL" id="AF228603">
    <property type="protein sequence ID" value="AAF34791.1"/>
    <property type="molecule type" value="mRNA"/>
</dbReference>
<dbReference type="EMBL" id="BC001226">
    <property type="protein sequence ID" value="AAH01226.1"/>
    <property type="molecule type" value="mRNA"/>
</dbReference>
<dbReference type="EMBL" id="BC008056">
    <property type="protein sequence ID" value="AAH08056.2"/>
    <property type="molecule type" value="mRNA"/>
</dbReference>
<dbReference type="CCDS" id="CCDS9782.1"/>
<dbReference type="RefSeq" id="NP_057529.1">
    <property type="nucleotide sequence ID" value="NM_016445.3"/>
</dbReference>
<dbReference type="PDB" id="1X1G">
    <property type="method" value="NMR"/>
    <property type="chains" value="A=238-353"/>
</dbReference>
<dbReference type="PDBsum" id="1X1G"/>
<dbReference type="SMR" id="Q9NYT0"/>
<dbReference type="BioGRID" id="117708">
    <property type="interactions" value="16"/>
</dbReference>
<dbReference type="FunCoup" id="Q9NYT0">
    <property type="interactions" value="478"/>
</dbReference>
<dbReference type="IntAct" id="Q9NYT0">
    <property type="interactions" value="1"/>
</dbReference>
<dbReference type="STRING" id="9606.ENSP00000216446"/>
<dbReference type="GlyGen" id="Q9NYT0">
    <property type="glycosylation" value="1 site"/>
</dbReference>
<dbReference type="iPTMnet" id="Q9NYT0"/>
<dbReference type="PhosphoSitePlus" id="Q9NYT0"/>
<dbReference type="BioMuta" id="PLEK2"/>
<dbReference type="DMDM" id="20532216"/>
<dbReference type="jPOST" id="Q9NYT0"/>
<dbReference type="MassIVE" id="Q9NYT0"/>
<dbReference type="PaxDb" id="9606-ENSP00000216446"/>
<dbReference type="PeptideAtlas" id="Q9NYT0"/>
<dbReference type="ProteomicsDB" id="83274"/>
<dbReference type="Pumba" id="Q9NYT0"/>
<dbReference type="Antibodypedia" id="96">
    <property type="antibodies" value="87 antibodies from 20 providers"/>
</dbReference>
<dbReference type="DNASU" id="26499"/>
<dbReference type="Ensembl" id="ENST00000216446.9">
    <property type="protein sequence ID" value="ENSP00000216446.4"/>
    <property type="gene ID" value="ENSG00000100558.9"/>
</dbReference>
<dbReference type="GeneID" id="26499"/>
<dbReference type="KEGG" id="hsa:26499"/>
<dbReference type="MANE-Select" id="ENST00000216446.9">
    <property type="protein sequence ID" value="ENSP00000216446.4"/>
    <property type="RefSeq nucleotide sequence ID" value="NM_016445.3"/>
    <property type="RefSeq protein sequence ID" value="NP_057529.1"/>
</dbReference>
<dbReference type="UCSC" id="uc001xjh.2">
    <property type="organism name" value="human"/>
</dbReference>
<dbReference type="AGR" id="HGNC:19238"/>
<dbReference type="CTD" id="26499"/>
<dbReference type="DisGeNET" id="26499"/>
<dbReference type="GeneCards" id="PLEK2"/>
<dbReference type="HGNC" id="HGNC:19238">
    <property type="gene designation" value="PLEK2"/>
</dbReference>
<dbReference type="HPA" id="ENSG00000100558">
    <property type="expression patterns" value="Tissue enhanced (adrenal)"/>
</dbReference>
<dbReference type="MIM" id="608007">
    <property type="type" value="gene"/>
</dbReference>
<dbReference type="neXtProt" id="NX_Q9NYT0"/>
<dbReference type="OpenTargets" id="ENSG00000100558"/>
<dbReference type="PharmGKB" id="PA134963543"/>
<dbReference type="VEuPathDB" id="HostDB:ENSG00000100558"/>
<dbReference type="eggNOG" id="ENOG502QYJ8">
    <property type="taxonomic scope" value="Eukaryota"/>
</dbReference>
<dbReference type="GeneTree" id="ENSGT00940000157229"/>
<dbReference type="HOGENOM" id="CLU_067828_0_0_1"/>
<dbReference type="InParanoid" id="Q9NYT0"/>
<dbReference type="OMA" id="VVRNWKV"/>
<dbReference type="OrthoDB" id="185175at2759"/>
<dbReference type="PAN-GO" id="Q9NYT0">
    <property type="GO annotations" value="2 GO annotations based on evolutionary models"/>
</dbReference>
<dbReference type="PhylomeDB" id="Q9NYT0"/>
<dbReference type="TreeFam" id="TF332246"/>
<dbReference type="PathwayCommons" id="Q9NYT0"/>
<dbReference type="BioGRID-ORCS" id="26499">
    <property type="hits" value="16 hits in 1155 CRISPR screens"/>
</dbReference>
<dbReference type="ChiTaRS" id="PLEK2">
    <property type="organism name" value="human"/>
</dbReference>
<dbReference type="EvolutionaryTrace" id="Q9NYT0"/>
<dbReference type="GeneWiki" id="PLEK2"/>
<dbReference type="GenomeRNAi" id="26499"/>
<dbReference type="Pharos" id="Q9NYT0">
    <property type="development level" value="Tbio"/>
</dbReference>
<dbReference type="PRO" id="PR:Q9NYT0"/>
<dbReference type="Proteomes" id="UP000005640">
    <property type="component" value="Chromosome 14"/>
</dbReference>
<dbReference type="RNAct" id="Q9NYT0">
    <property type="molecule type" value="protein"/>
</dbReference>
<dbReference type="Bgee" id="ENSG00000100558">
    <property type="expression patterns" value="Expressed in oocyte and 150 other cell types or tissues"/>
</dbReference>
<dbReference type="ExpressionAtlas" id="Q9NYT0">
    <property type="expression patterns" value="baseline and differential"/>
</dbReference>
<dbReference type="GO" id="GO:0005737">
    <property type="term" value="C:cytoplasm"/>
    <property type="evidence" value="ECO:0007669"/>
    <property type="project" value="UniProtKB-KW"/>
</dbReference>
<dbReference type="GO" id="GO:0005856">
    <property type="term" value="C:cytoskeleton"/>
    <property type="evidence" value="ECO:0007669"/>
    <property type="project" value="UniProtKB-SubCell"/>
</dbReference>
<dbReference type="GO" id="GO:0031258">
    <property type="term" value="C:lamellipodium membrane"/>
    <property type="evidence" value="ECO:0007669"/>
    <property type="project" value="UniProtKB-SubCell"/>
</dbReference>
<dbReference type="GO" id="GO:0005886">
    <property type="term" value="C:plasma membrane"/>
    <property type="evidence" value="ECO:0000318"/>
    <property type="project" value="GO_Central"/>
</dbReference>
<dbReference type="GO" id="GO:0043325">
    <property type="term" value="F:phosphatidylinositol-3,4-bisphosphate binding"/>
    <property type="evidence" value="ECO:0007669"/>
    <property type="project" value="Ensembl"/>
</dbReference>
<dbReference type="GO" id="GO:0080025">
    <property type="term" value="F:phosphatidylinositol-3,5-bisphosphate binding"/>
    <property type="evidence" value="ECO:0007669"/>
    <property type="project" value="Ensembl"/>
</dbReference>
<dbReference type="GO" id="GO:0032266">
    <property type="term" value="F:phosphatidylinositol-3-phosphate binding"/>
    <property type="evidence" value="ECO:0007669"/>
    <property type="project" value="Ensembl"/>
</dbReference>
<dbReference type="GO" id="GO:0030036">
    <property type="term" value="P:actin cytoskeleton organization"/>
    <property type="evidence" value="ECO:0000318"/>
    <property type="project" value="GO_Central"/>
</dbReference>
<dbReference type="GO" id="GO:0035556">
    <property type="term" value="P:intracellular signal transduction"/>
    <property type="evidence" value="ECO:0007669"/>
    <property type="project" value="InterPro"/>
</dbReference>
<dbReference type="GO" id="GO:0120034">
    <property type="term" value="P:positive regulation of plasma membrane bounded cell projection assembly"/>
    <property type="evidence" value="ECO:0007669"/>
    <property type="project" value="Ensembl"/>
</dbReference>
<dbReference type="CDD" id="cd04444">
    <property type="entry name" value="DEP_PLEK2"/>
    <property type="match status" value="1"/>
</dbReference>
<dbReference type="CDD" id="cd13301">
    <property type="entry name" value="PH1_Pleckstrin_2"/>
    <property type="match status" value="1"/>
</dbReference>
<dbReference type="CDD" id="cd13302">
    <property type="entry name" value="PH2_Pleckstrin_2"/>
    <property type="match status" value="1"/>
</dbReference>
<dbReference type="FunFam" id="1.10.10.10:FF:000312">
    <property type="entry name" value="Pleckstrin 2"/>
    <property type="match status" value="1"/>
</dbReference>
<dbReference type="FunFam" id="2.30.29.30:FF:000208">
    <property type="entry name" value="Pleckstrin 2"/>
    <property type="match status" value="1"/>
</dbReference>
<dbReference type="FunFam" id="2.30.29.30:FF:000243">
    <property type="entry name" value="Pleckstrin 2"/>
    <property type="match status" value="1"/>
</dbReference>
<dbReference type="Gene3D" id="2.30.29.30">
    <property type="entry name" value="Pleckstrin-homology domain (PH domain)/Phosphotyrosine-binding domain (PTB)"/>
    <property type="match status" value="2"/>
</dbReference>
<dbReference type="Gene3D" id="1.10.10.10">
    <property type="entry name" value="Winged helix-like DNA-binding domain superfamily/Winged helix DNA-binding domain"/>
    <property type="match status" value="1"/>
</dbReference>
<dbReference type="InterPro" id="IPR000591">
    <property type="entry name" value="DEP_dom"/>
</dbReference>
<dbReference type="InterPro" id="IPR011993">
    <property type="entry name" value="PH-like_dom_sf"/>
</dbReference>
<dbReference type="InterPro" id="IPR001849">
    <property type="entry name" value="PH_domain"/>
</dbReference>
<dbReference type="InterPro" id="IPR037370">
    <property type="entry name" value="Pleckstrin"/>
</dbReference>
<dbReference type="InterPro" id="IPR037369">
    <property type="entry name" value="PLEK2_DEP"/>
</dbReference>
<dbReference type="InterPro" id="IPR036388">
    <property type="entry name" value="WH-like_DNA-bd_sf"/>
</dbReference>
<dbReference type="InterPro" id="IPR036390">
    <property type="entry name" value="WH_DNA-bd_sf"/>
</dbReference>
<dbReference type="PANTHER" id="PTHR12092">
    <property type="entry name" value="PLECKSTRIN"/>
    <property type="match status" value="1"/>
</dbReference>
<dbReference type="PANTHER" id="PTHR12092:SF2">
    <property type="entry name" value="PLECKSTRIN-2"/>
    <property type="match status" value="1"/>
</dbReference>
<dbReference type="Pfam" id="PF00610">
    <property type="entry name" value="DEP"/>
    <property type="match status" value="1"/>
</dbReference>
<dbReference type="Pfam" id="PF00169">
    <property type="entry name" value="PH"/>
    <property type="match status" value="2"/>
</dbReference>
<dbReference type="SMART" id="SM00049">
    <property type="entry name" value="DEP"/>
    <property type="match status" value="1"/>
</dbReference>
<dbReference type="SMART" id="SM00233">
    <property type="entry name" value="PH"/>
    <property type="match status" value="2"/>
</dbReference>
<dbReference type="SUPFAM" id="SSF50729">
    <property type="entry name" value="PH domain-like"/>
    <property type="match status" value="2"/>
</dbReference>
<dbReference type="SUPFAM" id="SSF46785">
    <property type="entry name" value="Winged helix' DNA-binding domain"/>
    <property type="match status" value="1"/>
</dbReference>
<dbReference type="PROSITE" id="PS50186">
    <property type="entry name" value="DEP"/>
    <property type="match status" value="1"/>
</dbReference>
<dbReference type="PROSITE" id="PS50003">
    <property type="entry name" value="PH_DOMAIN"/>
    <property type="match status" value="2"/>
</dbReference>
<gene>
    <name type="primary">PLEK2</name>
</gene>
<sequence length="353" mass="39971">MEDGVLKEGFLVKRGHIVHNWKARWFILRQNTLVYYKLEGGRRVTPPKGRILLDGCTITCPCLEYENRPLLIKLKTQTSTEYFLEACSREERDAWAFEITGAIHAGQPGKVQQLHSLRNSFKLPPHISLHRIVDKMHDSNTGIRSSPNMEQGSTYKKTFLGSSLVDWLISNSFTASRLEAVTLASMLMEENFLRPVGVRSMGAIRSGDLAEQFLDDSTALYTFAESYKKKISPKEEISLSTVELSGTVVKQGYLAKQGHKRKNWKVRRFVLRKDPAFLHYYDPSKEENRPVGGFSLRGSLVSALEDNGVPTGVKGNVQGNLFKVITKDDTHYYIQASSKAERAEWIEAIKKLT</sequence>